<reference key="1">
    <citation type="submission" date="1997-02" db="EMBL/GenBank/DDBJ databases">
        <authorList>
            <person name="Hajdu A."/>
            <person name="Flanagan P.R."/>
        </authorList>
    </citation>
    <scope>NUCLEOTIDE SEQUENCE [MRNA]</scope>
    <source>
        <tissue>Intestine</tissue>
    </source>
</reference>
<name>MUC13_RAT</name>
<organism>
    <name type="scientific">Rattus norvegicus</name>
    <name type="common">Rat</name>
    <dbReference type="NCBI Taxonomy" id="10116"/>
    <lineage>
        <taxon>Eukaryota</taxon>
        <taxon>Metazoa</taxon>
        <taxon>Chordata</taxon>
        <taxon>Craniata</taxon>
        <taxon>Vertebrata</taxon>
        <taxon>Euteleostomi</taxon>
        <taxon>Mammalia</taxon>
        <taxon>Eutheria</taxon>
        <taxon>Euarchontoglires</taxon>
        <taxon>Glires</taxon>
        <taxon>Rodentia</taxon>
        <taxon>Myomorpha</taxon>
        <taxon>Muroidea</taxon>
        <taxon>Muridae</taxon>
        <taxon>Murinae</taxon>
        <taxon>Rattus</taxon>
    </lineage>
</organism>
<keyword id="KW-1003">Cell membrane</keyword>
<keyword id="KW-1015">Disulfide bond</keyword>
<keyword id="KW-0245">EGF-like domain</keyword>
<keyword id="KW-0325">Glycoprotein</keyword>
<keyword id="KW-0472">Membrane</keyword>
<keyword id="KW-1185">Reference proteome</keyword>
<keyword id="KW-0677">Repeat</keyword>
<keyword id="KW-0964">Secreted</keyword>
<keyword id="KW-0732">Signal</keyword>
<keyword id="KW-0812">Transmembrane</keyword>
<keyword id="KW-1133">Transmembrane helix</keyword>
<accession>P97881</accession>
<protein>
    <recommendedName>
        <fullName>Mucin-13</fullName>
        <shortName>MUC-13</shortName>
    </recommendedName>
</protein>
<gene>
    <name type="primary">Muc13</name>
</gene>
<sequence>MSQSSGGTSTPTTTATQPTSTSTQTPGTTQLLSTTSTPTTTATQPTSTSTQTPGTTQLPSTTSTPTTTATQPTXTSTQTPGTTQLPGTTSTPTTTATQPTSTSFQTPGTTQLPSSTSTPTTTATQPTSTASQTPGTTQPPGGASSPTTTVTQPTGSSSQTPGTTQPPGGASTPTTTVTQPTGSSSQTSGTTQPPGGASSSTVTSSSSTGSNDPCNSNPCKSPASCVKLYDSYFCLCLEGYYYNNSSSCVKGTTFPGEIGMSVNETTDLEDKNSVNYQTLHSSVVKFFENTFKKTDYGQTVILKVSKDSLMSSRSVMRAATQTVYVSVVNMFGENTKEDEESVASVIKEAVKTDNNVERYFQQDRCDYYGCVKSGSNVCRNGLQCTCKPGLERLNPQVPFCVAPTCSEPCSAEKKQLCLKKDNGAMECGCMAGYRKANGKCEECPFGYSGMDCKDQFQLILTIVGTIAGAFILILLIVFIVSMRSKNKKKSGEEQNLIEDDFHNLRMRPTGFSNFGADTSIFPKVKTGVPSQTSNPYANHRSMPRPDY</sequence>
<feature type="signal peptide">
    <location>
        <begin position="1"/>
        <end status="unknown"/>
    </location>
</feature>
<feature type="chain" id="PRO_0000019286" description="Mucin-13">
    <location>
        <begin status="unknown"/>
        <end position="547"/>
    </location>
</feature>
<feature type="topological domain" description="Extracellular" evidence="2">
    <location>
        <begin status="unknown"/>
        <end position="458"/>
    </location>
</feature>
<feature type="transmembrane region" description="Helical" evidence="2">
    <location>
        <begin position="459"/>
        <end position="479"/>
    </location>
</feature>
<feature type="topological domain" description="Cytoplasmic" evidence="2">
    <location>
        <begin position="480"/>
        <end position="547"/>
    </location>
</feature>
<feature type="domain" description="EGF-like 1" evidence="3">
    <location>
        <begin position="210"/>
        <end position="249"/>
    </location>
</feature>
<feature type="domain" description="SEA" evidence="4">
    <location>
        <begin position="250"/>
        <end position="366"/>
    </location>
</feature>
<feature type="domain" description="EGF-like 2" evidence="3">
    <location>
        <begin position="361"/>
        <end position="401"/>
    </location>
</feature>
<feature type="domain" description="EGF-like 3" evidence="3">
    <location>
        <begin position="401"/>
        <end position="441"/>
    </location>
</feature>
<feature type="region of interest" description="Disordered" evidence="5">
    <location>
        <begin position="1"/>
        <end position="218"/>
    </location>
</feature>
<feature type="region of interest" description="Disordered" evidence="5">
    <location>
        <begin position="525"/>
        <end position="547"/>
    </location>
</feature>
<feature type="compositionally biased region" description="Low complexity" evidence="5">
    <location>
        <begin position="1"/>
        <end position="210"/>
    </location>
</feature>
<feature type="glycosylation site" description="N-linked (GlcNAc...) asparagine" evidence="2">
    <location>
        <position position="243"/>
    </location>
</feature>
<feature type="glycosylation site" description="N-linked (GlcNAc...) asparagine" evidence="2">
    <location>
        <position position="244"/>
    </location>
</feature>
<feature type="glycosylation site" description="N-linked (GlcNAc...) asparagine" evidence="2">
    <location>
        <position position="263"/>
    </location>
</feature>
<feature type="disulfide bond" evidence="3">
    <location>
        <begin position="214"/>
        <end position="225"/>
    </location>
</feature>
<feature type="disulfide bond" evidence="3">
    <location>
        <begin position="219"/>
        <end position="234"/>
    </location>
</feature>
<feature type="disulfide bond" evidence="3">
    <location>
        <begin position="236"/>
        <end position="248"/>
    </location>
</feature>
<feature type="disulfide bond" evidence="3">
    <location>
        <begin position="365"/>
        <end position="378"/>
    </location>
</feature>
<feature type="disulfide bond" evidence="3">
    <location>
        <begin position="370"/>
        <end position="384"/>
    </location>
</feature>
<feature type="disulfide bond" evidence="3">
    <location>
        <begin position="386"/>
        <end position="400"/>
    </location>
</feature>
<feature type="disulfide bond" evidence="3">
    <location>
        <begin position="409"/>
        <end position="427"/>
    </location>
</feature>
<feature type="disulfide bond" evidence="3">
    <location>
        <begin position="429"/>
        <end position="440"/>
    </location>
</feature>
<dbReference type="EMBL" id="U89744">
    <property type="protein sequence ID" value="AAB49894.1"/>
    <property type="molecule type" value="mRNA"/>
</dbReference>
<dbReference type="FunCoup" id="P97881">
    <property type="interactions" value="16"/>
</dbReference>
<dbReference type="STRING" id="10116.ENSRNOP00000002444"/>
<dbReference type="GlyCosmos" id="P97881">
    <property type="glycosylation" value="3 sites, No reported glycans"/>
</dbReference>
<dbReference type="GlyGen" id="P97881">
    <property type="glycosylation" value="4 sites"/>
</dbReference>
<dbReference type="PhosphoSitePlus" id="P97881"/>
<dbReference type="PaxDb" id="10116-ENSRNOP00000067923"/>
<dbReference type="UCSC" id="RGD:708547">
    <property type="organism name" value="rat"/>
</dbReference>
<dbReference type="AGR" id="RGD:708547"/>
<dbReference type="RGD" id="708547">
    <property type="gene designation" value="Muc13"/>
</dbReference>
<dbReference type="InParanoid" id="P97881"/>
<dbReference type="PhylomeDB" id="P97881"/>
<dbReference type="Reactome" id="R-RNO-913709">
    <property type="pathway name" value="O-linked glycosylation of mucins"/>
</dbReference>
<dbReference type="Reactome" id="R-RNO-9696264">
    <property type="pathway name" value="RND3 GTPase cycle"/>
</dbReference>
<dbReference type="Reactome" id="R-RNO-9696270">
    <property type="pathway name" value="RND2 GTPase cycle"/>
</dbReference>
<dbReference type="Reactome" id="R-RNO-9696273">
    <property type="pathway name" value="RND1 GTPase cycle"/>
</dbReference>
<dbReference type="Reactome" id="R-RNO-977068">
    <property type="pathway name" value="Termination of O-glycan biosynthesis"/>
</dbReference>
<dbReference type="PRO" id="PR:P97881"/>
<dbReference type="Proteomes" id="UP000002494">
    <property type="component" value="Unplaced"/>
</dbReference>
<dbReference type="GO" id="GO:0016324">
    <property type="term" value="C:apical plasma membrane"/>
    <property type="evidence" value="ECO:0000314"/>
    <property type="project" value="RGD"/>
</dbReference>
<dbReference type="GO" id="GO:0005829">
    <property type="term" value="C:cytosol"/>
    <property type="evidence" value="ECO:0000266"/>
    <property type="project" value="RGD"/>
</dbReference>
<dbReference type="GO" id="GO:0005615">
    <property type="term" value="C:extracellular space"/>
    <property type="evidence" value="ECO:0000266"/>
    <property type="project" value="RGD"/>
</dbReference>
<dbReference type="GO" id="GO:0042803">
    <property type="term" value="F:protein homodimerization activity"/>
    <property type="evidence" value="ECO:0000266"/>
    <property type="project" value="RGD"/>
</dbReference>
<dbReference type="GO" id="GO:0030277">
    <property type="term" value="P:maintenance of gastrointestinal epithelium"/>
    <property type="evidence" value="ECO:0000266"/>
    <property type="project" value="RGD"/>
</dbReference>
<dbReference type="CDD" id="cd00054">
    <property type="entry name" value="EGF_CA"/>
    <property type="match status" value="1"/>
</dbReference>
<dbReference type="Gene3D" id="2.10.25.10">
    <property type="entry name" value="Laminin"/>
    <property type="match status" value="1"/>
</dbReference>
<dbReference type="InterPro" id="IPR000742">
    <property type="entry name" value="EGF-like_dom"/>
</dbReference>
<dbReference type="InterPro" id="IPR000082">
    <property type="entry name" value="SEA_dom"/>
</dbReference>
<dbReference type="PANTHER" id="PTHR24037">
    <property type="entry name" value="HEART DEVELOPMENT PROTEIN WITH EGF-LIKE DOMAINS 1"/>
    <property type="match status" value="1"/>
</dbReference>
<dbReference type="PANTHER" id="PTHR24037:SF10">
    <property type="entry name" value="MUCIN-13"/>
    <property type="match status" value="1"/>
</dbReference>
<dbReference type="PRINTS" id="PR01217">
    <property type="entry name" value="PRICHEXTENSN"/>
</dbReference>
<dbReference type="SMART" id="SM00181">
    <property type="entry name" value="EGF"/>
    <property type="match status" value="3"/>
</dbReference>
<dbReference type="SMART" id="SM00200">
    <property type="entry name" value="SEA"/>
    <property type="match status" value="1"/>
</dbReference>
<dbReference type="SUPFAM" id="SSF57196">
    <property type="entry name" value="EGF/Laminin"/>
    <property type="match status" value="1"/>
</dbReference>
<dbReference type="PROSITE" id="PS01186">
    <property type="entry name" value="EGF_2"/>
    <property type="match status" value="2"/>
</dbReference>
<dbReference type="PROSITE" id="PS50026">
    <property type="entry name" value="EGF_3"/>
    <property type="match status" value="1"/>
</dbReference>
<dbReference type="PROSITE" id="PS50024">
    <property type="entry name" value="SEA"/>
    <property type="match status" value="1"/>
</dbReference>
<evidence type="ECO:0000250" key="1"/>
<evidence type="ECO:0000255" key="2"/>
<evidence type="ECO:0000255" key="3">
    <source>
        <dbReference type="PROSITE-ProRule" id="PRU00076"/>
    </source>
</evidence>
<evidence type="ECO:0000255" key="4">
    <source>
        <dbReference type="PROSITE-ProRule" id="PRU00188"/>
    </source>
</evidence>
<evidence type="ECO:0000256" key="5">
    <source>
        <dbReference type="SAM" id="MobiDB-lite"/>
    </source>
</evidence>
<evidence type="ECO:0000305" key="6"/>
<proteinExistence type="evidence at transcript level"/>
<comment type="function">
    <text>Epithelial and hemopoietic transmembrane mucin that may play a role in cell signaling.</text>
</comment>
<comment type="subunit">
    <text evidence="1">Homodimer of beta subunits.</text>
</comment>
<comment type="subcellular location">
    <subcellularLocation>
        <location evidence="6">Cell membrane</location>
        <topology evidence="6">Single-pass type I membrane protein</topology>
    </subcellularLocation>
    <subcellularLocation>
        <location evidence="1">Secreted</location>
    </subcellularLocation>
    <text evidence="1">Also exists as a soluble form.</text>
</comment>
<comment type="PTM">
    <text evidence="1">Cleaved into two subunits, alpha and beta, probably between the first EGF domain and the SEA domain. Beta subunit contains the cytoplasmic tail and alpha subunit the extracellular tail. The homooligomerization into dimers is dependent on intrachain disulfide bonds (By similarity).</text>
</comment>
<comment type="PTM">
    <text evidence="1">Highly glycosylated.</text>
</comment>